<comment type="function">
    <text evidence="1">Probable kinase that may be involved in a calcium-signaling pathway controlling neuronal migration in the developing brain. May also participate in functions of the mature nervous system (By similarity).</text>
</comment>
<comment type="catalytic activity">
    <reaction>
        <text>L-seryl-[protein] + ATP = O-phospho-L-seryl-[protein] + ADP + H(+)</text>
        <dbReference type="Rhea" id="RHEA:17989"/>
        <dbReference type="Rhea" id="RHEA-COMP:9863"/>
        <dbReference type="Rhea" id="RHEA-COMP:11604"/>
        <dbReference type="ChEBI" id="CHEBI:15378"/>
        <dbReference type="ChEBI" id="CHEBI:29999"/>
        <dbReference type="ChEBI" id="CHEBI:30616"/>
        <dbReference type="ChEBI" id="CHEBI:83421"/>
        <dbReference type="ChEBI" id="CHEBI:456216"/>
        <dbReference type="EC" id="2.7.11.1"/>
    </reaction>
</comment>
<comment type="catalytic activity">
    <reaction>
        <text>L-threonyl-[protein] + ATP = O-phospho-L-threonyl-[protein] + ADP + H(+)</text>
        <dbReference type="Rhea" id="RHEA:46608"/>
        <dbReference type="Rhea" id="RHEA-COMP:11060"/>
        <dbReference type="Rhea" id="RHEA-COMP:11605"/>
        <dbReference type="ChEBI" id="CHEBI:15378"/>
        <dbReference type="ChEBI" id="CHEBI:30013"/>
        <dbReference type="ChEBI" id="CHEBI:30616"/>
        <dbReference type="ChEBI" id="CHEBI:61977"/>
        <dbReference type="ChEBI" id="CHEBI:456216"/>
        <dbReference type="EC" id="2.7.11.1"/>
    </reaction>
</comment>
<comment type="alternative products">
    <event type="alternative splicing"/>
    <isoform>
        <id>Q9JLM8-1</id>
        <name>1</name>
        <sequence type="displayed"/>
    </isoform>
    <isoform>
        <id>Q9JLM8-2</id>
        <name>2</name>
        <sequence type="described" ref="VSP_019593 VSP_019594"/>
    </isoform>
</comment>
<comment type="similarity">
    <text evidence="8">Belongs to the protein kinase superfamily. CAMK Ser/Thr protein kinase family. CaMK subfamily.</text>
</comment>
<accession>Q9JLM8</accession>
<accession>Q6P207</accession>
<protein>
    <recommendedName>
        <fullName>Serine/threonine-protein kinase DCLK1</fullName>
        <ecNumber>2.7.11.1</ecNumber>
    </recommendedName>
    <alternativeName>
        <fullName>Doublecortin-like and CAM kinase-like 1</fullName>
    </alternativeName>
    <alternativeName>
        <fullName>Doublecortin-like kinase 1</fullName>
    </alternativeName>
</protein>
<sequence length="756" mass="84153">MSFGRDMELEHFDERDKAQRYSRGSRVNGLPSPTHSAHCSFYRTRTLQTLSSEKKAKKVRFYRNGDRYFKGIVYAISPDRFRSFEALLADLTRTLSDNVNLPQGVRTIYTIDGLKKISSLDQLVEGESYVCGSIEPFKKLEYTKNVNPNWSVNVKTTSASRAVSSLATAKGGPSEVRENKDFIRPKLVTIIRSGVKPRKAVRILLNKKTAHSFEQVLTDITDAIKLDSGVVKRLYTLDGKQVMCLQDFFGDDDIFIACGPEKFRYQDDFLLDESECRVVKSTSYTKIASASRRGTTKSPGPSRRSKSPASTSSVNGTPGSQLSTPRSGKSPSPSPTSPGSLRKQRISQHGGSSTSLSSTKVCSSMDENDGPGEGDELGRRHSLQRGWRREESEEGFQIPATITERYKVGRTIGDGNFAVVKECIERSTAREYALKIIKKSKCRGKEHMIQNEVSILRRVKHPNIVLLIEEMDVPTELYLVMELVKGGDLFDAITSTSKYTERDASGMLYNLASAIKYLHSLNIVHRDIKPENLLVYEHQDGSKSLKLGDFGLATIVDGPLYTVCGTPTYVAPEIIAETGYGLKVDIWAAGVITYILLCGFPPFRGSGDDQEVLFDQILMGQVDFPSPYWDNVSDSAKELINMMLLVNVDQRFSAVQVLEHPWVNDDGLPENEHQLSVAGKIKKHFNTGPKPSSTAAGVSVIATTALDKERQVFRRRRNQDVRSRYKAQPAPPELNSESEDYSPSSSETVRSPNSPF</sequence>
<evidence type="ECO:0000250" key="1"/>
<evidence type="ECO:0000250" key="2">
    <source>
        <dbReference type="UniProtKB" id="O08875"/>
    </source>
</evidence>
<evidence type="ECO:0000255" key="3">
    <source>
        <dbReference type="PROSITE-ProRule" id="PRU00072"/>
    </source>
</evidence>
<evidence type="ECO:0000255" key="4">
    <source>
        <dbReference type="PROSITE-ProRule" id="PRU00159"/>
    </source>
</evidence>
<evidence type="ECO:0000255" key="5">
    <source>
        <dbReference type="PROSITE-ProRule" id="PRU10027"/>
    </source>
</evidence>
<evidence type="ECO:0000256" key="6">
    <source>
        <dbReference type="SAM" id="MobiDB-lite"/>
    </source>
</evidence>
<evidence type="ECO:0000303" key="7">
    <source>
    </source>
</evidence>
<evidence type="ECO:0000305" key="8"/>
<evidence type="ECO:0007744" key="9">
    <source>
    </source>
</evidence>
<evidence type="ECO:0007744" key="10">
    <source>
    </source>
</evidence>
<evidence type="ECO:0007744" key="11">
    <source>
    </source>
</evidence>
<evidence type="ECO:0007744" key="12">
    <source>
    </source>
</evidence>
<evidence type="ECO:0007744" key="13">
    <source>
    </source>
</evidence>
<name>DCLK1_MOUSE</name>
<reference key="1">
    <citation type="journal article" date="1999" name="J. Neurosci. Res.">
        <title>KIAA0369, doublecortin-like kinase, is expressed during brain development.</title>
        <authorList>
            <person name="Burgess H.A."/>
            <person name="Martinez S."/>
            <person name="Reiner O."/>
        </authorList>
    </citation>
    <scope>NUCLEOTIDE SEQUENCE [MRNA] (ISOFORM 1)</scope>
    <source>
        <tissue>Brain</tissue>
    </source>
</reference>
<reference key="2">
    <citation type="journal article" date="2004" name="Genome Res.">
        <title>The status, quality, and expansion of the NIH full-length cDNA project: the Mammalian Gene Collection (MGC).</title>
        <authorList>
            <consortium name="The MGC Project Team"/>
        </authorList>
    </citation>
    <scope>NUCLEOTIDE SEQUENCE [LARGE SCALE MRNA] (ISOFORM 2)</scope>
    <source>
        <strain>C57BL/6J</strain>
        <tissue>Embryo</tissue>
    </source>
</reference>
<reference key="3">
    <citation type="journal article" date="2004" name="Mol. Cell. Proteomics">
        <title>Phosphoproteomic analysis of the developing mouse brain.</title>
        <authorList>
            <person name="Ballif B.A."/>
            <person name="Villen J."/>
            <person name="Beausoleil S.A."/>
            <person name="Schwartz D."/>
            <person name="Gygi S.P."/>
        </authorList>
    </citation>
    <scope>PHOSPHORYLATION [LARGE SCALE ANALYSIS] AT SER-307</scope>
    <scope>IDENTIFICATION BY MASS SPECTROMETRY [LARGE SCALE ANALYSIS]</scope>
    <source>
        <tissue>Embryonic brain</tissue>
    </source>
</reference>
<reference key="4">
    <citation type="journal article" date="2006" name="Mol. Cell. Proteomics">
        <title>Comprehensive identification of phosphorylation sites in postsynaptic density preparations.</title>
        <authorList>
            <person name="Trinidad J.C."/>
            <person name="Specht C.G."/>
            <person name="Thalhammer A."/>
            <person name="Schoepfer R."/>
            <person name="Burlingame A.L."/>
        </authorList>
    </citation>
    <scope>PHOSPHORYLATION [LARGE SCALE ANALYSIS] AT SER-392</scope>
    <scope>IDENTIFICATION BY MASS SPECTROMETRY [LARGE SCALE ANALYSIS]</scope>
    <source>
        <tissue>Brain</tissue>
    </source>
</reference>
<reference key="5">
    <citation type="journal article" date="2008" name="J. Proteome Res.">
        <title>Large-scale identification and evolution indexing of tyrosine phosphorylation sites from murine brain.</title>
        <authorList>
            <person name="Ballif B.A."/>
            <person name="Carey G.R."/>
            <person name="Sunyaev S.R."/>
            <person name="Gygi S.P."/>
        </authorList>
    </citation>
    <scope>PHOSPHORYLATION [LARGE SCALE ANALYSIS] AT TYR-536</scope>
    <scope>IDENTIFICATION BY MASS SPECTROMETRY [LARGE SCALE ANALYSIS]</scope>
    <source>
        <tissue>Brain</tissue>
    </source>
</reference>
<reference key="6">
    <citation type="journal article" date="2009" name="Mol. Cell. Proteomics">
        <title>Large scale localization of protein phosphorylation by use of electron capture dissociation mass spectrometry.</title>
        <authorList>
            <person name="Sweet S.M."/>
            <person name="Bailey C.M."/>
            <person name="Cunningham D.L."/>
            <person name="Heath J.K."/>
            <person name="Cooper H.J."/>
        </authorList>
    </citation>
    <scope>PHOSPHORYLATION [LARGE SCALE ANALYSIS] AT SER-330; SER-332 AND SER-337</scope>
    <scope>IDENTIFICATION BY MASS SPECTROMETRY [LARGE SCALE ANALYSIS]</scope>
    <source>
        <tissue>Embryonic fibroblast</tissue>
    </source>
</reference>
<reference key="7">
    <citation type="journal article" date="2010" name="Cell">
        <title>A tissue-specific atlas of mouse protein phosphorylation and expression.</title>
        <authorList>
            <person name="Huttlin E.L."/>
            <person name="Jedrychowski M.P."/>
            <person name="Elias J.E."/>
            <person name="Goswami T."/>
            <person name="Rad R."/>
            <person name="Beausoleil S.A."/>
            <person name="Villen J."/>
            <person name="Haas W."/>
            <person name="Sowa M.E."/>
            <person name="Gygi S.P."/>
        </authorList>
    </citation>
    <scope>PHOSPHORYLATION [LARGE SCALE ANALYSIS] AT SER-32; SER-36; THR-46; SER-305; SER-307; SER-330; SER-332; SER-334; SER-337; SER-347; SER-352; SER-355; SER-364; SER-392; SER-742; SER-751 AND SER-754</scope>
    <scope>PHOSPHORYLATION [LARGE SCALE ANALYSIS] AT SER-352; SER-353; SER-358 AND SER-362 (ISOFORM 2)</scope>
    <scope>IDENTIFICATION BY MASS SPECTROMETRY [LARGE SCALE ANALYSIS]</scope>
    <source>
        <tissue>Brain</tissue>
        <tissue>Brown adipose tissue</tissue>
        <tissue>Heart</tissue>
        <tissue>Kidney</tissue>
        <tissue>Lung</tissue>
        <tissue>Pancreas</tissue>
        <tissue>Spleen</tissue>
    </source>
</reference>
<organism>
    <name type="scientific">Mus musculus</name>
    <name type="common">Mouse</name>
    <dbReference type="NCBI Taxonomy" id="10090"/>
    <lineage>
        <taxon>Eukaryota</taxon>
        <taxon>Metazoa</taxon>
        <taxon>Chordata</taxon>
        <taxon>Craniata</taxon>
        <taxon>Vertebrata</taxon>
        <taxon>Euteleostomi</taxon>
        <taxon>Mammalia</taxon>
        <taxon>Eutheria</taxon>
        <taxon>Euarchontoglires</taxon>
        <taxon>Glires</taxon>
        <taxon>Rodentia</taxon>
        <taxon>Myomorpha</taxon>
        <taxon>Muroidea</taxon>
        <taxon>Muridae</taxon>
        <taxon>Murinae</taxon>
        <taxon>Mus</taxon>
        <taxon>Mus</taxon>
    </lineage>
</organism>
<feature type="chain" id="PRO_0000085920" description="Serine/threonine-protein kinase DCLK1">
    <location>
        <begin position="1"/>
        <end position="756"/>
    </location>
</feature>
<feature type="domain" description="Doublecortin 1" evidence="3">
    <location>
        <begin position="57"/>
        <end position="143"/>
    </location>
</feature>
<feature type="domain" description="Doublecortin 2" evidence="3">
    <location>
        <begin position="186"/>
        <end position="269"/>
    </location>
</feature>
<feature type="domain" description="Protein kinase" evidence="4">
    <location>
        <begin position="406"/>
        <end position="663"/>
    </location>
</feature>
<feature type="region of interest" description="Disordered" evidence="6">
    <location>
        <begin position="288"/>
        <end position="393"/>
    </location>
</feature>
<feature type="region of interest" description="Disordered" evidence="6">
    <location>
        <begin position="711"/>
        <end position="756"/>
    </location>
</feature>
<feature type="compositionally biased region" description="Low complexity" evidence="6">
    <location>
        <begin position="297"/>
        <end position="313"/>
    </location>
</feature>
<feature type="compositionally biased region" description="Low complexity" evidence="6">
    <location>
        <begin position="347"/>
        <end position="364"/>
    </location>
</feature>
<feature type="compositionally biased region" description="Acidic residues" evidence="6">
    <location>
        <begin position="366"/>
        <end position="375"/>
    </location>
</feature>
<feature type="compositionally biased region" description="Basic and acidic residues" evidence="6">
    <location>
        <begin position="711"/>
        <end position="723"/>
    </location>
</feature>
<feature type="active site" description="Proton acceptor" evidence="4 5">
    <location>
        <position position="527"/>
    </location>
</feature>
<feature type="binding site" evidence="4">
    <location>
        <begin position="412"/>
        <end position="420"/>
    </location>
    <ligand>
        <name>ATP</name>
        <dbReference type="ChEBI" id="CHEBI:30616"/>
    </ligand>
</feature>
<feature type="binding site" evidence="4">
    <location>
        <position position="435"/>
    </location>
    <ligand>
        <name>ATP</name>
        <dbReference type="ChEBI" id="CHEBI:30616"/>
    </ligand>
</feature>
<feature type="modified residue" description="Phosphoserine" evidence="13">
    <location>
        <position position="32"/>
    </location>
</feature>
<feature type="modified residue" description="Phosphoserine" evidence="13">
    <location>
        <position position="36"/>
    </location>
</feature>
<feature type="modified residue" description="Phosphothreonine" evidence="13">
    <location>
        <position position="46"/>
    </location>
</feature>
<feature type="modified residue" description="Phosphoserine" evidence="13">
    <location>
        <position position="305"/>
    </location>
</feature>
<feature type="modified residue" description="Phosphoserine" evidence="9 13">
    <location>
        <position position="307"/>
    </location>
</feature>
<feature type="modified residue" description="Phosphoserine" evidence="12 13">
    <location>
        <position position="330"/>
    </location>
</feature>
<feature type="modified residue" description="Phosphoserine" evidence="12 13">
    <location>
        <position position="332"/>
    </location>
</feature>
<feature type="modified residue" description="Phosphoserine" evidence="13">
    <location>
        <position position="334"/>
    </location>
</feature>
<feature type="modified residue" description="Phosphoserine" evidence="12 13">
    <location>
        <position position="337"/>
    </location>
</feature>
<feature type="modified residue" description="Phosphoserine" evidence="13">
    <location>
        <position position="347"/>
    </location>
</feature>
<feature type="modified residue" description="Phosphoserine" evidence="13">
    <location>
        <position position="352"/>
    </location>
</feature>
<feature type="modified residue" description="Phosphoserine" evidence="2">
    <location>
        <position position="353"/>
    </location>
</feature>
<feature type="modified residue" description="Phosphoserine" evidence="13">
    <location>
        <position position="355"/>
    </location>
</feature>
<feature type="modified residue" description="Phosphoserine" evidence="13">
    <location>
        <position position="364"/>
    </location>
</feature>
<feature type="modified residue" description="Phosphoserine" evidence="10 13">
    <location>
        <position position="392"/>
    </location>
</feature>
<feature type="modified residue" description="Phosphotyrosine" evidence="11">
    <location>
        <position position="536"/>
    </location>
</feature>
<feature type="modified residue" description="Phosphoserine" evidence="13">
    <location>
        <position position="742"/>
    </location>
</feature>
<feature type="modified residue" description="Phosphoserine" evidence="13">
    <location>
        <position position="751"/>
    </location>
</feature>
<feature type="modified residue" description="Phosphoserine" evidence="13">
    <location>
        <position position="754"/>
    </location>
</feature>
<feature type="splice variant" id="VSP_019593" description="In isoform 2." evidence="7">
    <original>KQRISQHGGSSTSLSSTKVCS</original>
    <variation>RQRDLYRPLSSDDLDSVGDSV</variation>
    <location>
        <begin position="343"/>
        <end position="363"/>
    </location>
</feature>
<feature type="splice variant" id="VSP_019594" description="In isoform 2." evidence="7">
    <location>
        <begin position="364"/>
        <end position="756"/>
    </location>
</feature>
<feature type="modified residue" description="Phosphoserine" evidence="13">
    <location sequence="Q9JLM8-2">
        <position position="352"/>
    </location>
</feature>
<feature type="modified residue" description="Phosphoserine" evidence="13">
    <location sequence="Q9JLM8-2">
        <position position="353"/>
    </location>
</feature>
<feature type="modified residue" description="Phosphoserine" evidence="13">
    <location sequence="Q9JLM8-2">
        <position position="358"/>
    </location>
</feature>
<feature type="modified residue" description="Phosphoserine" evidence="13">
    <location sequence="Q9JLM8-2">
        <position position="362"/>
    </location>
</feature>
<keyword id="KW-0025">Alternative splicing</keyword>
<keyword id="KW-0067">ATP-binding</keyword>
<keyword id="KW-0217">Developmental protein</keyword>
<keyword id="KW-0221">Differentiation</keyword>
<keyword id="KW-0418">Kinase</keyword>
<keyword id="KW-0524">Neurogenesis</keyword>
<keyword id="KW-0547">Nucleotide-binding</keyword>
<keyword id="KW-0597">Phosphoprotein</keyword>
<keyword id="KW-1185">Reference proteome</keyword>
<keyword id="KW-0677">Repeat</keyword>
<keyword id="KW-0723">Serine/threonine-protein kinase</keyword>
<keyword id="KW-0808">Transferase</keyword>
<proteinExistence type="evidence at protein level"/>
<gene>
    <name type="primary">Dclk1</name>
    <name type="synonym">Dcamkl1</name>
    <name type="synonym">Dclk</name>
</gene>
<dbReference type="EC" id="2.7.11.1"/>
<dbReference type="EMBL" id="AF155819">
    <property type="protein sequence ID" value="AAF26673.1"/>
    <property type="molecule type" value="mRNA"/>
</dbReference>
<dbReference type="EMBL" id="BC064783">
    <property type="protein sequence ID" value="AAH64783.1"/>
    <property type="molecule type" value="mRNA"/>
</dbReference>
<dbReference type="CCDS" id="CCDS17359.1">
    <molecule id="Q9JLM8-1"/>
</dbReference>
<dbReference type="CCDS" id="CCDS50909.1">
    <molecule id="Q9JLM8-2"/>
</dbReference>
<dbReference type="RefSeq" id="NP_064362.1">
    <molecule id="Q9JLM8-1"/>
    <property type="nucleotide sequence ID" value="NM_019978.4"/>
</dbReference>
<dbReference type="SMR" id="Q9JLM8"/>
<dbReference type="BioGRID" id="199063">
    <property type="interactions" value="14"/>
</dbReference>
<dbReference type="FunCoup" id="Q9JLM8">
    <property type="interactions" value="603"/>
</dbReference>
<dbReference type="IntAct" id="Q9JLM8">
    <property type="interactions" value="11"/>
</dbReference>
<dbReference type="MINT" id="Q9JLM8"/>
<dbReference type="STRING" id="10090.ENSMUSP00000050034"/>
<dbReference type="GlyGen" id="Q9JLM8">
    <property type="glycosylation" value="3 sites, 1 N-linked glycan (1 site), 1 O-linked glycan (2 sites)"/>
</dbReference>
<dbReference type="iPTMnet" id="Q9JLM8"/>
<dbReference type="MetOSite" id="Q9JLM8"/>
<dbReference type="PhosphoSitePlus" id="Q9JLM8"/>
<dbReference type="SwissPalm" id="Q9JLM8"/>
<dbReference type="jPOST" id="Q9JLM8"/>
<dbReference type="PaxDb" id="10090-ENSMUSP00000050034"/>
<dbReference type="PeptideAtlas" id="Q9JLM8"/>
<dbReference type="ProteomicsDB" id="279838">
    <molecule id="Q9JLM8-1"/>
</dbReference>
<dbReference type="ProteomicsDB" id="279839">
    <molecule id="Q9JLM8-2"/>
</dbReference>
<dbReference type="Pumba" id="Q9JLM8"/>
<dbReference type="Antibodypedia" id="23046">
    <property type="antibodies" value="438 antibodies from 39 providers"/>
</dbReference>
<dbReference type="DNASU" id="13175"/>
<dbReference type="Ensembl" id="ENSMUST00000054237.14">
    <molecule id="Q9JLM8-1"/>
    <property type="protein sequence ID" value="ENSMUSP00000050034.8"/>
    <property type="gene ID" value="ENSMUSG00000027797.16"/>
</dbReference>
<dbReference type="GeneID" id="13175"/>
<dbReference type="KEGG" id="mmu:13175"/>
<dbReference type="UCSC" id="uc008pgl.2">
    <molecule id="Q9JLM8-1"/>
    <property type="organism name" value="mouse"/>
</dbReference>
<dbReference type="AGR" id="MGI:1330861"/>
<dbReference type="CTD" id="9201"/>
<dbReference type="MGI" id="MGI:1330861">
    <property type="gene designation" value="Dclk1"/>
</dbReference>
<dbReference type="VEuPathDB" id="HostDB:ENSMUSG00000027797"/>
<dbReference type="eggNOG" id="KOG0032">
    <property type="taxonomic scope" value="Eukaryota"/>
</dbReference>
<dbReference type="eggNOG" id="KOG3757">
    <property type="taxonomic scope" value="Eukaryota"/>
</dbReference>
<dbReference type="GeneTree" id="ENSGT00940000154956"/>
<dbReference type="InParanoid" id="Q9JLM8"/>
<dbReference type="OrthoDB" id="1738954at2759"/>
<dbReference type="PhylomeDB" id="Q9JLM8"/>
<dbReference type="TreeFam" id="TF318770"/>
<dbReference type="BRENDA" id="2.7.11.1">
    <property type="organism ID" value="3474"/>
</dbReference>
<dbReference type="BioGRID-ORCS" id="13175">
    <property type="hits" value="2 hits in 80 CRISPR screens"/>
</dbReference>
<dbReference type="CD-CODE" id="CE726F99">
    <property type="entry name" value="Postsynaptic density"/>
</dbReference>
<dbReference type="ChiTaRS" id="Dclk1">
    <property type="organism name" value="mouse"/>
</dbReference>
<dbReference type="PRO" id="PR:Q9JLM8"/>
<dbReference type="Proteomes" id="UP000000589">
    <property type="component" value="Chromosome 3"/>
</dbReference>
<dbReference type="RNAct" id="Q9JLM8">
    <property type="molecule type" value="protein"/>
</dbReference>
<dbReference type="Bgee" id="ENSMUSG00000027797">
    <property type="expression patterns" value="Expressed in stria vascularis of cochlear duct and 237 other cell types or tissues"/>
</dbReference>
<dbReference type="ExpressionAtlas" id="Q9JLM8">
    <property type="expression patterns" value="baseline and differential"/>
</dbReference>
<dbReference type="GO" id="GO:0098978">
    <property type="term" value="C:glutamatergic synapse"/>
    <property type="evidence" value="ECO:0000314"/>
    <property type="project" value="SynGO"/>
</dbReference>
<dbReference type="GO" id="GO:0098794">
    <property type="term" value="C:postsynapse"/>
    <property type="evidence" value="ECO:0000314"/>
    <property type="project" value="SynGO"/>
</dbReference>
<dbReference type="GO" id="GO:0014069">
    <property type="term" value="C:postsynaptic density"/>
    <property type="evidence" value="ECO:0000314"/>
    <property type="project" value="MGI"/>
</dbReference>
<dbReference type="GO" id="GO:0005524">
    <property type="term" value="F:ATP binding"/>
    <property type="evidence" value="ECO:0007669"/>
    <property type="project" value="UniProtKB-KW"/>
</dbReference>
<dbReference type="GO" id="GO:0004672">
    <property type="term" value="F:protein kinase activity"/>
    <property type="evidence" value="ECO:0000314"/>
    <property type="project" value="MGI"/>
</dbReference>
<dbReference type="GO" id="GO:0106310">
    <property type="term" value="F:protein serine kinase activity"/>
    <property type="evidence" value="ECO:0007669"/>
    <property type="project" value="RHEA"/>
</dbReference>
<dbReference type="GO" id="GO:0004674">
    <property type="term" value="F:protein serine/threonine kinase activity"/>
    <property type="evidence" value="ECO:0007669"/>
    <property type="project" value="UniProtKB-KW"/>
</dbReference>
<dbReference type="GO" id="GO:0048675">
    <property type="term" value="P:axon extension"/>
    <property type="evidence" value="ECO:0000316"/>
    <property type="project" value="MGI"/>
</dbReference>
<dbReference type="GO" id="GO:0007409">
    <property type="term" value="P:axonogenesis"/>
    <property type="evidence" value="ECO:0000315"/>
    <property type="project" value="MGI"/>
</dbReference>
<dbReference type="GO" id="GO:0007420">
    <property type="term" value="P:brain development"/>
    <property type="evidence" value="ECO:0000316"/>
    <property type="project" value="MGI"/>
</dbReference>
<dbReference type="GO" id="GO:0021952">
    <property type="term" value="P:central nervous system projection neuron axonogenesis"/>
    <property type="evidence" value="ECO:0000316"/>
    <property type="project" value="MGI"/>
</dbReference>
<dbReference type="GO" id="GO:0048813">
    <property type="term" value="P:dendrite morphogenesis"/>
    <property type="evidence" value="ECO:0000316"/>
    <property type="project" value="MGI"/>
</dbReference>
<dbReference type="GO" id="GO:0030900">
    <property type="term" value="P:forebrain development"/>
    <property type="evidence" value="ECO:0000315"/>
    <property type="project" value="MGI"/>
</dbReference>
<dbReference type="GO" id="GO:0035556">
    <property type="term" value="P:intracellular signal transduction"/>
    <property type="evidence" value="ECO:0007669"/>
    <property type="project" value="InterPro"/>
</dbReference>
<dbReference type="GO" id="GO:1900181">
    <property type="term" value="P:negative regulation of protein localization to nucleus"/>
    <property type="evidence" value="ECO:0000314"/>
    <property type="project" value="MGI"/>
</dbReference>
<dbReference type="GO" id="GO:0001764">
    <property type="term" value="P:neuron migration"/>
    <property type="evidence" value="ECO:0000316"/>
    <property type="project" value="MGI"/>
</dbReference>
<dbReference type="GO" id="GO:0034504">
    <property type="term" value="P:protein localization to nucleus"/>
    <property type="evidence" value="ECO:0000314"/>
    <property type="project" value="MGI"/>
</dbReference>
<dbReference type="GO" id="GO:0150052">
    <property type="term" value="P:regulation of postsynapse assembly"/>
    <property type="evidence" value="ECO:0000314"/>
    <property type="project" value="SynGO"/>
</dbReference>
<dbReference type="CDD" id="cd17140">
    <property type="entry name" value="DCX1_DCLK1"/>
    <property type="match status" value="1"/>
</dbReference>
<dbReference type="CDD" id="cd17069">
    <property type="entry name" value="DCX2"/>
    <property type="match status" value="1"/>
</dbReference>
<dbReference type="CDD" id="cd14183">
    <property type="entry name" value="STKc_DCKL1"/>
    <property type="match status" value="1"/>
</dbReference>
<dbReference type="FunFam" id="3.10.20.230:FF:000003">
    <property type="entry name" value="Neuronal migration protein doublecortin"/>
    <property type="match status" value="1"/>
</dbReference>
<dbReference type="FunFam" id="1.10.510.10:FF:000066">
    <property type="entry name" value="Serine/threonine-protein kinase DCLK1 isoform 2"/>
    <property type="match status" value="1"/>
</dbReference>
<dbReference type="FunFam" id="3.30.200.20:FF:000057">
    <property type="entry name" value="Serine/threonine-protein kinase DCLK1 isoform 2"/>
    <property type="match status" value="1"/>
</dbReference>
<dbReference type="FunFam" id="3.10.20.230:FF:000001">
    <property type="entry name" value="serine/threonine-protein kinase DCLK1 isoform X1"/>
    <property type="match status" value="1"/>
</dbReference>
<dbReference type="Gene3D" id="3.10.20.230">
    <property type="entry name" value="Doublecortin domain"/>
    <property type="match status" value="2"/>
</dbReference>
<dbReference type="Gene3D" id="3.30.200.20">
    <property type="entry name" value="Phosphorylase Kinase, domain 1"/>
    <property type="match status" value="1"/>
</dbReference>
<dbReference type="Gene3D" id="1.10.510.10">
    <property type="entry name" value="Transferase(Phosphotransferase) domain 1"/>
    <property type="match status" value="1"/>
</dbReference>
<dbReference type="InterPro" id="IPR003533">
    <property type="entry name" value="Doublecortin_dom"/>
</dbReference>
<dbReference type="InterPro" id="IPR036572">
    <property type="entry name" value="Doublecortin_dom_sf"/>
</dbReference>
<dbReference type="InterPro" id="IPR011009">
    <property type="entry name" value="Kinase-like_dom_sf"/>
</dbReference>
<dbReference type="InterPro" id="IPR000719">
    <property type="entry name" value="Prot_kinase_dom"/>
</dbReference>
<dbReference type="InterPro" id="IPR017441">
    <property type="entry name" value="Protein_kinase_ATP_BS"/>
</dbReference>
<dbReference type="InterPro" id="IPR008271">
    <property type="entry name" value="Ser/Thr_kinase_AS"/>
</dbReference>
<dbReference type="PANTHER" id="PTHR24347">
    <property type="entry name" value="SERINE/THREONINE-PROTEIN KINASE"/>
    <property type="match status" value="1"/>
</dbReference>
<dbReference type="Pfam" id="PF03607">
    <property type="entry name" value="DCX"/>
    <property type="match status" value="2"/>
</dbReference>
<dbReference type="Pfam" id="PF00069">
    <property type="entry name" value="Pkinase"/>
    <property type="match status" value="1"/>
</dbReference>
<dbReference type="SMART" id="SM00537">
    <property type="entry name" value="DCX"/>
    <property type="match status" value="2"/>
</dbReference>
<dbReference type="SMART" id="SM00220">
    <property type="entry name" value="S_TKc"/>
    <property type="match status" value="1"/>
</dbReference>
<dbReference type="SUPFAM" id="SSF89837">
    <property type="entry name" value="Doublecortin (DC)"/>
    <property type="match status" value="2"/>
</dbReference>
<dbReference type="SUPFAM" id="SSF56112">
    <property type="entry name" value="Protein kinase-like (PK-like)"/>
    <property type="match status" value="1"/>
</dbReference>
<dbReference type="PROSITE" id="PS50309">
    <property type="entry name" value="DC"/>
    <property type="match status" value="2"/>
</dbReference>
<dbReference type="PROSITE" id="PS00107">
    <property type="entry name" value="PROTEIN_KINASE_ATP"/>
    <property type="match status" value="1"/>
</dbReference>
<dbReference type="PROSITE" id="PS50011">
    <property type="entry name" value="PROTEIN_KINASE_DOM"/>
    <property type="match status" value="1"/>
</dbReference>
<dbReference type="PROSITE" id="PS00108">
    <property type="entry name" value="PROTEIN_KINASE_ST"/>
    <property type="match status" value="1"/>
</dbReference>